<reference key="1">
    <citation type="journal article" date="2008" name="Nucleic Acids Res.">
        <title>The complete nucleotide sequences of the five genetically distinct plastid genomes of Oenothera, subsection Oenothera: I. Sequence evaluation and plastome evolution.</title>
        <authorList>
            <person name="Greiner S."/>
            <person name="Wang X."/>
            <person name="Rauwolf U."/>
            <person name="Silber M.V."/>
            <person name="Mayer K."/>
            <person name="Meurer J."/>
            <person name="Haberer G."/>
            <person name="Herrmann R.G."/>
        </authorList>
    </citation>
    <scope>NUCLEOTIDE SEQUENCE [LARGE SCALE GENOMIC DNA]</scope>
    <source>
        <strain>cv. Rr-lamarckiana Sweden</strain>
    </source>
</reference>
<dbReference type="EMBL" id="EU262890">
    <property type="protein sequence ID" value="ABX10030.1"/>
    <property type="molecule type" value="Genomic_DNA"/>
</dbReference>
<dbReference type="RefSeq" id="YP_001687276.1">
    <property type="nucleotide sequence ID" value="NC_010360.2"/>
</dbReference>
<dbReference type="SMR" id="B0Z537"/>
<dbReference type="GeneID" id="5955303"/>
<dbReference type="GO" id="GO:0009507">
    <property type="term" value="C:chloroplast"/>
    <property type="evidence" value="ECO:0007669"/>
    <property type="project" value="UniProtKB-SubCell"/>
</dbReference>
<dbReference type="GO" id="GO:0015935">
    <property type="term" value="C:small ribosomal subunit"/>
    <property type="evidence" value="ECO:0007669"/>
    <property type="project" value="TreeGrafter"/>
</dbReference>
<dbReference type="GO" id="GO:0019843">
    <property type="term" value="F:rRNA binding"/>
    <property type="evidence" value="ECO:0007669"/>
    <property type="project" value="UniProtKB-UniRule"/>
</dbReference>
<dbReference type="GO" id="GO:0003735">
    <property type="term" value="F:structural constituent of ribosome"/>
    <property type="evidence" value="ECO:0007669"/>
    <property type="project" value="InterPro"/>
</dbReference>
<dbReference type="GO" id="GO:0006412">
    <property type="term" value="P:translation"/>
    <property type="evidence" value="ECO:0007669"/>
    <property type="project" value="UniProtKB-UniRule"/>
</dbReference>
<dbReference type="FunFam" id="1.10.287.1480:FF:000001">
    <property type="entry name" value="30S ribosomal protein S14"/>
    <property type="match status" value="1"/>
</dbReference>
<dbReference type="Gene3D" id="1.10.287.1480">
    <property type="match status" value="1"/>
</dbReference>
<dbReference type="HAMAP" id="MF_00537">
    <property type="entry name" value="Ribosomal_uS14_1"/>
    <property type="match status" value="1"/>
</dbReference>
<dbReference type="InterPro" id="IPR001209">
    <property type="entry name" value="Ribosomal_uS14"/>
</dbReference>
<dbReference type="InterPro" id="IPR023036">
    <property type="entry name" value="Ribosomal_uS14_bac/plastid"/>
</dbReference>
<dbReference type="InterPro" id="IPR018271">
    <property type="entry name" value="Ribosomal_uS14_CS"/>
</dbReference>
<dbReference type="NCBIfam" id="NF006477">
    <property type="entry name" value="PRK08881.1"/>
    <property type="match status" value="1"/>
</dbReference>
<dbReference type="PANTHER" id="PTHR19836">
    <property type="entry name" value="30S RIBOSOMAL PROTEIN S14"/>
    <property type="match status" value="1"/>
</dbReference>
<dbReference type="PANTHER" id="PTHR19836:SF19">
    <property type="entry name" value="SMALL RIBOSOMAL SUBUNIT PROTEIN US14M"/>
    <property type="match status" value="1"/>
</dbReference>
<dbReference type="Pfam" id="PF00253">
    <property type="entry name" value="Ribosomal_S14"/>
    <property type="match status" value="1"/>
</dbReference>
<dbReference type="SUPFAM" id="SSF57716">
    <property type="entry name" value="Glucocorticoid receptor-like (DNA-binding domain)"/>
    <property type="match status" value="1"/>
</dbReference>
<dbReference type="PROSITE" id="PS00527">
    <property type="entry name" value="RIBOSOMAL_S14"/>
    <property type="match status" value="1"/>
</dbReference>
<organism>
    <name type="scientific">Oenothera glazioviana</name>
    <name type="common">Large-flowered evening primrose</name>
    <name type="synonym">Oenothera erythrosepala</name>
    <dbReference type="NCBI Taxonomy" id="482428"/>
    <lineage>
        <taxon>Eukaryota</taxon>
        <taxon>Viridiplantae</taxon>
        <taxon>Streptophyta</taxon>
        <taxon>Embryophyta</taxon>
        <taxon>Tracheophyta</taxon>
        <taxon>Spermatophyta</taxon>
        <taxon>Magnoliopsida</taxon>
        <taxon>eudicotyledons</taxon>
        <taxon>Gunneridae</taxon>
        <taxon>Pentapetalae</taxon>
        <taxon>rosids</taxon>
        <taxon>malvids</taxon>
        <taxon>Myrtales</taxon>
        <taxon>Onagraceae</taxon>
        <taxon>Onagroideae</taxon>
        <taxon>Onagreae</taxon>
        <taxon>Oenothera</taxon>
    </lineage>
</organism>
<feature type="chain" id="PRO_0000354432" description="Small ribosomal subunit protein uS14c">
    <location>
        <begin position="1"/>
        <end position="100"/>
    </location>
</feature>
<proteinExistence type="inferred from homology"/>
<geneLocation type="chloroplast"/>
<accession>B0Z537</accession>
<comment type="function">
    <text evidence="1">Binds 16S rRNA, required for the assembly of 30S particles.</text>
</comment>
<comment type="subunit">
    <text evidence="1">Part of the 30S ribosomal subunit.</text>
</comment>
<comment type="subcellular location">
    <subcellularLocation>
        <location>Plastid</location>
        <location>Chloroplast</location>
    </subcellularLocation>
</comment>
<comment type="similarity">
    <text evidence="1">Belongs to the universal ribosomal protein uS14 family.</text>
</comment>
<gene>
    <name evidence="1" type="primary">rps14</name>
</gene>
<protein>
    <recommendedName>
        <fullName evidence="1">Small ribosomal subunit protein uS14c</fullName>
    </recommendedName>
    <alternativeName>
        <fullName evidence="2">30S ribosomal protein S14, chloroplastic</fullName>
    </alternativeName>
</protein>
<sequence>MARKGLIQREKKREKLEQKYRLIRRSSKKEISTAPSLSEKWKIHGKLQSSPRNSAPTRLHRRCFSTGRPRANYRDFRLSGHILREMVHACLLPGATRSSW</sequence>
<evidence type="ECO:0000255" key="1">
    <source>
        <dbReference type="HAMAP-Rule" id="MF_00537"/>
    </source>
</evidence>
<evidence type="ECO:0000305" key="2"/>
<name>RR14_OENGL</name>
<keyword id="KW-0150">Chloroplast</keyword>
<keyword id="KW-0934">Plastid</keyword>
<keyword id="KW-0687">Ribonucleoprotein</keyword>
<keyword id="KW-0689">Ribosomal protein</keyword>
<keyword id="KW-0694">RNA-binding</keyword>
<keyword id="KW-0699">rRNA-binding</keyword>